<comment type="function">
    <text evidence="1">Activates KDO (a required 8-carbon sugar) for incorporation into bacterial lipopolysaccharide in Gram-negative bacteria.</text>
</comment>
<comment type="catalytic activity">
    <reaction evidence="1">
        <text>3-deoxy-alpha-D-manno-oct-2-ulosonate + CTP = CMP-3-deoxy-beta-D-manno-octulosonate + diphosphate</text>
        <dbReference type="Rhea" id="RHEA:23448"/>
        <dbReference type="ChEBI" id="CHEBI:33019"/>
        <dbReference type="ChEBI" id="CHEBI:37563"/>
        <dbReference type="ChEBI" id="CHEBI:85986"/>
        <dbReference type="ChEBI" id="CHEBI:85987"/>
        <dbReference type="EC" id="2.7.7.38"/>
    </reaction>
</comment>
<comment type="pathway">
    <text evidence="1">Nucleotide-sugar biosynthesis; CMP-3-deoxy-D-manno-octulosonate biosynthesis; CMP-3-deoxy-D-manno-octulosonate from 3-deoxy-D-manno-octulosonate and CTP: step 1/1.</text>
</comment>
<comment type="pathway">
    <text evidence="1">Bacterial outer membrane biogenesis; lipopolysaccharide biosynthesis.</text>
</comment>
<comment type="subcellular location">
    <subcellularLocation>
        <location evidence="1">Cytoplasm</location>
    </subcellularLocation>
</comment>
<comment type="similarity">
    <text evidence="1">Belongs to the KdsB family.</text>
</comment>
<accession>B0UT79</accession>
<organism>
    <name type="scientific">Histophilus somni (strain 2336)</name>
    <name type="common">Haemophilus somnus</name>
    <dbReference type="NCBI Taxonomy" id="228400"/>
    <lineage>
        <taxon>Bacteria</taxon>
        <taxon>Pseudomonadati</taxon>
        <taxon>Pseudomonadota</taxon>
        <taxon>Gammaproteobacteria</taxon>
        <taxon>Pasteurellales</taxon>
        <taxon>Pasteurellaceae</taxon>
        <taxon>Histophilus</taxon>
    </lineage>
</organism>
<gene>
    <name evidence="1" type="primary">kdsB</name>
    <name type="ordered locus">HSM_0998</name>
</gene>
<keyword id="KW-0963">Cytoplasm</keyword>
<keyword id="KW-0448">Lipopolysaccharide biosynthesis</keyword>
<keyword id="KW-0548">Nucleotidyltransferase</keyword>
<keyword id="KW-0808">Transferase</keyword>
<sequence length="256" mass="28969">MNFTVIIPARYASSRLPGKPLADIAGKPMIQHVWEKAQQSGATRVVVATDYEEVARAVRGFDGEVCMTSSQHNSGTERLAEVIEKLAVPDDEIIVNIQGDEPLIPPVIVSQVAQNLQKYQVNMATLAVKIEDVEELFNPNVVKVLTDKDGYVLYFSRAVIPWDRDQFVQLGKADLSQLQLHQHYFRHIGIYAYRAGFIKQYVQWQPTTLEQIERLEQLRVLWNGERIHVELAKQAPAVGVDTVEDLEKVRSILSHV</sequence>
<reference key="1">
    <citation type="submission" date="2008-02" db="EMBL/GenBank/DDBJ databases">
        <title>Complete sequence of Haemophilus somnus 2336.</title>
        <authorList>
            <consortium name="US DOE Joint Genome Institute"/>
            <person name="Siddaramappa S."/>
            <person name="Duncan A.J."/>
            <person name="Challacombe J.F."/>
            <person name="Rainey D."/>
            <person name="Gillaspy A.F."/>
            <person name="Carson M."/>
            <person name="Gipson J."/>
            <person name="Gipson M."/>
            <person name="Bruce D."/>
            <person name="Detter J.C."/>
            <person name="Han C.S."/>
            <person name="Land M."/>
            <person name="Tapia R."/>
            <person name="Thompson L.S."/>
            <person name="Orvis J."/>
            <person name="Zaitshik J."/>
            <person name="Barnes G."/>
            <person name="Brettin T.S."/>
            <person name="Dyer D.W."/>
            <person name="Inzana T.J."/>
        </authorList>
    </citation>
    <scope>NUCLEOTIDE SEQUENCE [LARGE SCALE GENOMIC DNA]</scope>
    <source>
        <strain>2336</strain>
    </source>
</reference>
<proteinExistence type="inferred from homology"/>
<dbReference type="EC" id="2.7.7.38" evidence="1"/>
<dbReference type="EMBL" id="CP000947">
    <property type="protein sequence ID" value="ACA32685.1"/>
    <property type="molecule type" value="Genomic_DNA"/>
</dbReference>
<dbReference type="RefSeq" id="WP_012341796.1">
    <property type="nucleotide sequence ID" value="NC_010519.1"/>
</dbReference>
<dbReference type="SMR" id="B0UT79"/>
<dbReference type="STRING" id="228400.HSM_0998"/>
<dbReference type="GeneID" id="31487296"/>
<dbReference type="KEGG" id="hsm:HSM_0998"/>
<dbReference type="HOGENOM" id="CLU_065038_1_0_6"/>
<dbReference type="UniPathway" id="UPA00030"/>
<dbReference type="UniPathway" id="UPA00358">
    <property type="reaction ID" value="UER00476"/>
</dbReference>
<dbReference type="GO" id="GO:0005829">
    <property type="term" value="C:cytosol"/>
    <property type="evidence" value="ECO:0007669"/>
    <property type="project" value="TreeGrafter"/>
</dbReference>
<dbReference type="GO" id="GO:0008690">
    <property type="term" value="F:3-deoxy-manno-octulosonate cytidylyltransferase activity"/>
    <property type="evidence" value="ECO:0007669"/>
    <property type="project" value="UniProtKB-UniRule"/>
</dbReference>
<dbReference type="GO" id="GO:0033468">
    <property type="term" value="P:CMP-keto-3-deoxy-D-manno-octulosonic acid biosynthetic process"/>
    <property type="evidence" value="ECO:0007669"/>
    <property type="project" value="UniProtKB-UniRule"/>
</dbReference>
<dbReference type="GO" id="GO:0009103">
    <property type="term" value="P:lipopolysaccharide biosynthetic process"/>
    <property type="evidence" value="ECO:0007669"/>
    <property type="project" value="UniProtKB-UniRule"/>
</dbReference>
<dbReference type="CDD" id="cd02517">
    <property type="entry name" value="CMP-KDO-Synthetase"/>
    <property type="match status" value="1"/>
</dbReference>
<dbReference type="FunFam" id="3.90.550.10:FF:000011">
    <property type="entry name" value="3-deoxy-manno-octulosonate cytidylyltransferase"/>
    <property type="match status" value="1"/>
</dbReference>
<dbReference type="Gene3D" id="3.90.550.10">
    <property type="entry name" value="Spore Coat Polysaccharide Biosynthesis Protein SpsA, Chain A"/>
    <property type="match status" value="1"/>
</dbReference>
<dbReference type="HAMAP" id="MF_00057">
    <property type="entry name" value="KdsB"/>
    <property type="match status" value="1"/>
</dbReference>
<dbReference type="InterPro" id="IPR003329">
    <property type="entry name" value="Cytidylyl_trans"/>
</dbReference>
<dbReference type="InterPro" id="IPR004528">
    <property type="entry name" value="KdsB"/>
</dbReference>
<dbReference type="InterPro" id="IPR029044">
    <property type="entry name" value="Nucleotide-diphossugar_trans"/>
</dbReference>
<dbReference type="NCBIfam" id="TIGR00466">
    <property type="entry name" value="kdsB"/>
    <property type="match status" value="1"/>
</dbReference>
<dbReference type="NCBIfam" id="NF003950">
    <property type="entry name" value="PRK05450.1-3"/>
    <property type="match status" value="1"/>
</dbReference>
<dbReference type="NCBIfam" id="NF003952">
    <property type="entry name" value="PRK05450.1-5"/>
    <property type="match status" value="1"/>
</dbReference>
<dbReference type="NCBIfam" id="NF009905">
    <property type="entry name" value="PRK13368.1"/>
    <property type="match status" value="1"/>
</dbReference>
<dbReference type="PANTHER" id="PTHR42866">
    <property type="entry name" value="3-DEOXY-MANNO-OCTULOSONATE CYTIDYLYLTRANSFERASE"/>
    <property type="match status" value="1"/>
</dbReference>
<dbReference type="PANTHER" id="PTHR42866:SF2">
    <property type="entry name" value="3-DEOXY-MANNO-OCTULOSONATE CYTIDYLYLTRANSFERASE, MITOCHONDRIAL"/>
    <property type="match status" value="1"/>
</dbReference>
<dbReference type="Pfam" id="PF02348">
    <property type="entry name" value="CTP_transf_3"/>
    <property type="match status" value="1"/>
</dbReference>
<dbReference type="SUPFAM" id="SSF53448">
    <property type="entry name" value="Nucleotide-diphospho-sugar transferases"/>
    <property type="match status" value="1"/>
</dbReference>
<protein>
    <recommendedName>
        <fullName evidence="1">3-deoxy-manno-octulosonate cytidylyltransferase</fullName>
        <ecNumber evidence="1">2.7.7.38</ecNumber>
    </recommendedName>
    <alternativeName>
        <fullName evidence="1">CMP-2-keto-3-deoxyoctulosonic acid synthase</fullName>
        <shortName evidence="1">CKS</shortName>
        <shortName evidence="1">CMP-KDO synthase</shortName>
    </alternativeName>
</protein>
<evidence type="ECO:0000255" key="1">
    <source>
        <dbReference type="HAMAP-Rule" id="MF_00057"/>
    </source>
</evidence>
<name>KDSB_HISS2</name>
<feature type="chain" id="PRO_1000091875" description="3-deoxy-manno-octulosonate cytidylyltransferase">
    <location>
        <begin position="1"/>
        <end position="256"/>
    </location>
</feature>